<accession>Q3A6P7</accession>
<organism>
    <name type="scientific">Syntrophotalea carbinolica (strain DSM 2380 / NBRC 103641 / GraBd1)</name>
    <name type="common">Pelobacter carbinolicus</name>
    <dbReference type="NCBI Taxonomy" id="338963"/>
    <lineage>
        <taxon>Bacteria</taxon>
        <taxon>Pseudomonadati</taxon>
        <taxon>Thermodesulfobacteriota</taxon>
        <taxon>Desulfuromonadia</taxon>
        <taxon>Desulfuromonadales</taxon>
        <taxon>Syntrophotaleaceae</taxon>
        <taxon>Syntrophotalea</taxon>
    </lineage>
</organism>
<name>RL3_SYNC1</name>
<reference key="1">
    <citation type="submission" date="2005-10" db="EMBL/GenBank/DDBJ databases">
        <title>Complete sequence of Pelobacter carbinolicus DSM 2380.</title>
        <authorList>
            <person name="Copeland A."/>
            <person name="Lucas S."/>
            <person name="Lapidus A."/>
            <person name="Barry K."/>
            <person name="Detter J.C."/>
            <person name="Glavina T."/>
            <person name="Hammon N."/>
            <person name="Israni S."/>
            <person name="Pitluck S."/>
            <person name="Chertkov O."/>
            <person name="Schmutz J."/>
            <person name="Larimer F."/>
            <person name="Land M."/>
            <person name="Kyrpides N."/>
            <person name="Ivanova N."/>
            <person name="Richardson P."/>
        </authorList>
    </citation>
    <scope>NUCLEOTIDE SEQUENCE [LARGE SCALE GENOMIC DNA]</scope>
    <source>
        <strain>DSM 2380 / NBRC 103641 / GraBd1</strain>
    </source>
</reference>
<keyword id="KW-1185">Reference proteome</keyword>
<keyword id="KW-0687">Ribonucleoprotein</keyword>
<keyword id="KW-0689">Ribosomal protein</keyword>
<keyword id="KW-0694">RNA-binding</keyword>
<keyword id="KW-0699">rRNA-binding</keyword>
<evidence type="ECO:0000255" key="1">
    <source>
        <dbReference type="HAMAP-Rule" id="MF_01325"/>
    </source>
</evidence>
<evidence type="ECO:0000305" key="2"/>
<dbReference type="EMBL" id="CP000142">
    <property type="protein sequence ID" value="ABA87960.1"/>
    <property type="molecule type" value="Genomic_DNA"/>
</dbReference>
<dbReference type="RefSeq" id="WP_011340403.1">
    <property type="nucleotide sequence ID" value="NC_007498.2"/>
</dbReference>
<dbReference type="SMR" id="Q3A6P7"/>
<dbReference type="STRING" id="338963.Pcar_0701"/>
<dbReference type="KEGG" id="pca:Pcar_0701"/>
<dbReference type="eggNOG" id="COG0087">
    <property type="taxonomic scope" value="Bacteria"/>
</dbReference>
<dbReference type="HOGENOM" id="CLU_044142_4_1_7"/>
<dbReference type="OrthoDB" id="9806135at2"/>
<dbReference type="Proteomes" id="UP000002534">
    <property type="component" value="Chromosome"/>
</dbReference>
<dbReference type="GO" id="GO:0022625">
    <property type="term" value="C:cytosolic large ribosomal subunit"/>
    <property type="evidence" value="ECO:0007669"/>
    <property type="project" value="TreeGrafter"/>
</dbReference>
<dbReference type="GO" id="GO:0019843">
    <property type="term" value="F:rRNA binding"/>
    <property type="evidence" value="ECO:0007669"/>
    <property type="project" value="UniProtKB-UniRule"/>
</dbReference>
<dbReference type="GO" id="GO:0003735">
    <property type="term" value="F:structural constituent of ribosome"/>
    <property type="evidence" value="ECO:0007669"/>
    <property type="project" value="InterPro"/>
</dbReference>
<dbReference type="GO" id="GO:0006412">
    <property type="term" value="P:translation"/>
    <property type="evidence" value="ECO:0007669"/>
    <property type="project" value="UniProtKB-UniRule"/>
</dbReference>
<dbReference type="FunFam" id="2.40.30.10:FF:000004">
    <property type="entry name" value="50S ribosomal protein L3"/>
    <property type="match status" value="1"/>
</dbReference>
<dbReference type="FunFam" id="3.30.160.810:FF:000001">
    <property type="entry name" value="50S ribosomal protein L3"/>
    <property type="match status" value="1"/>
</dbReference>
<dbReference type="Gene3D" id="3.30.160.810">
    <property type="match status" value="1"/>
</dbReference>
<dbReference type="Gene3D" id="2.40.30.10">
    <property type="entry name" value="Translation factors"/>
    <property type="match status" value="1"/>
</dbReference>
<dbReference type="HAMAP" id="MF_01325_B">
    <property type="entry name" value="Ribosomal_uL3_B"/>
    <property type="match status" value="1"/>
</dbReference>
<dbReference type="InterPro" id="IPR000597">
    <property type="entry name" value="Ribosomal_uL3"/>
</dbReference>
<dbReference type="InterPro" id="IPR019927">
    <property type="entry name" value="Ribosomal_uL3_bac/org-type"/>
</dbReference>
<dbReference type="InterPro" id="IPR019926">
    <property type="entry name" value="Ribosomal_uL3_CS"/>
</dbReference>
<dbReference type="InterPro" id="IPR009000">
    <property type="entry name" value="Transl_B-barrel_sf"/>
</dbReference>
<dbReference type="NCBIfam" id="TIGR03625">
    <property type="entry name" value="L3_bact"/>
    <property type="match status" value="1"/>
</dbReference>
<dbReference type="PANTHER" id="PTHR11229">
    <property type="entry name" value="50S RIBOSOMAL PROTEIN L3"/>
    <property type="match status" value="1"/>
</dbReference>
<dbReference type="PANTHER" id="PTHR11229:SF16">
    <property type="entry name" value="LARGE RIBOSOMAL SUBUNIT PROTEIN UL3C"/>
    <property type="match status" value="1"/>
</dbReference>
<dbReference type="Pfam" id="PF00297">
    <property type="entry name" value="Ribosomal_L3"/>
    <property type="match status" value="1"/>
</dbReference>
<dbReference type="SUPFAM" id="SSF50447">
    <property type="entry name" value="Translation proteins"/>
    <property type="match status" value="1"/>
</dbReference>
<dbReference type="PROSITE" id="PS00474">
    <property type="entry name" value="RIBOSOMAL_L3"/>
    <property type="match status" value="1"/>
</dbReference>
<comment type="function">
    <text evidence="1">One of the primary rRNA binding proteins, it binds directly near the 3'-end of the 23S rRNA, where it nucleates assembly of the 50S subunit.</text>
</comment>
<comment type="subunit">
    <text evidence="1">Part of the 50S ribosomal subunit. Forms a cluster with proteins L14 and L19.</text>
</comment>
<comment type="similarity">
    <text evidence="1">Belongs to the universal ribosomal protein uL3 family.</text>
</comment>
<sequence length="210" mass="22461">MTKGILGKKLGMTQVFAVDGKCIPVTVVEAGPCVVLQKKTEEKDGYNALQLGFGAKKTQSVNKPAMGHFKKSGKGAFEFLREVECENIDDHAVGDEITCDGFFATGDVIDVTGTSKGKGFQGVIKRWNFAGGRASHGSMFHRRPGGIGASAWPSRVFKGKKMAGQMGNKRVTTQGLEVVDVRPEKSLVLIKGAVPGPVNGLLLIRKSRKV</sequence>
<gene>
    <name evidence="1" type="primary">rplC</name>
    <name type="ordered locus">Pcar_0701</name>
</gene>
<feature type="chain" id="PRO_0000241382" description="Large ribosomal subunit protein uL3">
    <location>
        <begin position="1"/>
        <end position="210"/>
    </location>
</feature>
<proteinExistence type="inferred from homology"/>
<protein>
    <recommendedName>
        <fullName evidence="1">Large ribosomal subunit protein uL3</fullName>
    </recommendedName>
    <alternativeName>
        <fullName evidence="2">50S ribosomal protein L3</fullName>
    </alternativeName>
</protein>